<keyword id="KW-1003">Cell membrane</keyword>
<keyword id="KW-0406">Ion transport</keyword>
<keyword id="KW-0472">Membrane</keyword>
<keyword id="KW-0597">Phosphoprotein</keyword>
<keyword id="KW-0630">Potassium</keyword>
<keyword id="KW-0633">Potassium transport</keyword>
<keyword id="KW-1185">Reference proteome</keyword>
<keyword id="KW-0812">Transmembrane</keyword>
<keyword id="KW-1133">Transmembrane helix</keyword>
<keyword id="KW-0813">Transport</keyword>
<comment type="function">
    <text>Probable potassium transporter.</text>
</comment>
<comment type="subcellular location">
    <subcellularLocation>
        <location evidence="3">Cell membrane</location>
        <topology evidence="3">Multi-pass membrane protein</topology>
    </subcellularLocation>
</comment>
<comment type="similarity">
    <text evidence="3">Belongs to the HAK/KUP transporter (TC 2.A.72.3) family.</text>
</comment>
<comment type="sequence caution" evidence="3">
    <conflict type="erroneous gene model prediction">
        <sequence resource="EMBL-CDS" id="CAC05466"/>
    </conflict>
</comment>
<evidence type="ECO:0000255" key="1"/>
<evidence type="ECO:0000256" key="2">
    <source>
        <dbReference type="SAM" id="MobiDB-lite"/>
    </source>
</evidence>
<evidence type="ECO:0000305" key="3"/>
<evidence type="ECO:0007744" key="4">
    <source>
    </source>
</evidence>
<gene>
    <name type="primary">POT7</name>
    <name type="synonym">HAK7</name>
    <name type="synonym">KUP7</name>
    <name type="ordered locus">At5g09400</name>
    <name type="ORF">T5E8_200</name>
</gene>
<organism>
    <name type="scientific">Arabidopsis thaliana</name>
    <name type="common">Mouse-ear cress</name>
    <dbReference type="NCBI Taxonomy" id="3702"/>
    <lineage>
        <taxon>Eukaryota</taxon>
        <taxon>Viridiplantae</taxon>
        <taxon>Streptophyta</taxon>
        <taxon>Embryophyta</taxon>
        <taxon>Tracheophyta</taxon>
        <taxon>Spermatophyta</taxon>
        <taxon>Magnoliopsida</taxon>
        <taxon>eudicotyledons</taxon>
        <taxon>Gunneridae</taxon>
        <taxon>Pentapetalae</taxon>
        <taxon>rosids</taxon>
        <taxon>malvids</taxon>
        <taxon>Brassicales</taxon>
        <taxon>Brassicaceae</taxon>
        <taxon>Camelineae</taxon>
        <taxon>Arabidopsis</taxon>
    </lineage>
</organism>
<feature type="chain" id="PRO_0000209083" description="Potassium transporter 7">
    <location>
        <begin position="1"/>
        <end position="858"/>
    </location>
</feature>
<feature type="topological domain" description="Cytoplasmic" evidence="1">
    <location>
        <begin position="1"/>
        <end position="104"/>
    </location>
</feature>
<feature type="transmembrane region" description="Helical" evidence="1">
    <location>
        <begin position="105"/>
        <end position="125"/>
    </location>
</feature>
<feature type="topological domain" description="Extracellular" evidence="1">
    <location>
        <begin position="126"/>
        <end position="147"/>
    </location>
</feature>
<feature type="transmembrane region" description="Helical" evidence="1">
    <location>
        <begin position="148"/>
        <end position="168"/>
    </location>
</feature>
<feature type="topological domain" description="Cytoplasmic" evidence="1">
    <location>
        <begin position="169"/>
        <end position="232"/>
    </location>
</feature>
<feature type="transmembrane region" description="Helical" evidence="1">
    <location>
        <begin position="233"/>
        <end position="253"/>
    </location>
</feature>
<feature type="topological domain" description="Extracellular" evidence="1">
    <location>
        <begin position="254"/>
        <end position="269"/>
    </location>
</feature>
<feature type="transmembrane region" description="Helical" evidence="1">
    <location>
        <begin position="270"/>
        <end position="290"/>
    </location>
</feature>
<feature type="topological domain" description="Cytoplasmic" evidence="1">
    <location>
        <begin position="291"/>
        <end position="297"/>
    </location>
</feature>
<feature type="transmembrane region" description="Helical" evidence="1">
    <location>
        <begin position="298"/>
        <end position="318"/>
    </location>
</feature>
<feature type="topological domain" description="Extracellular" evidence="1">
    <location>
        <begin position="319"/>
        <end position="345"/>
    </location>
</feature>
<feature type="transmembrane region" description="Helical" evidence="1">
    <location>
        <begin position="346"/>
        <end position="366"/>
    </location>
</feature>
<feature type="topological domain" description="Cytoplasmic" evidence="1">
    <location>
        <begin position="367"/>
        <end position="380"/>
    </location>
</feature>
<feature type="transmembrane region" description="Helical" evidence="1">
    <location>
        <begin position="381"/>
        <end position="401"/>
    </location>
</feature>
<feature type="topological domain" description="Extracellular" evidence="1">
    <location>
        <begin position="402"/>
        <end position="413"/>
    </location>
</feature>
<feature type="transmembrane region" description="Helical" evidence="1">
    <location>
        <begin position="414"/>
        <end position="434"/>
    </location>
</feature>
<feature type="topological domain" description="Cytoplasmic" evidence="1">
    <location>
        <begin position="435"/>
        <end position="470"/>
    </location>
</feature>
<feature type="transmembrane region" description="Helical" evidence="1">
    <location>
        <begin position="471"/>
        <end position="491"/>
    </location>
</feature>
<feature type="topological domain" description="Extracellular" evidence="1">
    <location>
        <begin position="492"/>
        <end position="496"/>
    </location>
</feature>
<feature type="transmembrane region" description="Helical" evidence="1">
    <location>
        <begin position="497"/>
        <end position="517"/>
    </location>
</feature>
<feature type="topological domain" description="Cytoplasmic" evidence="1">
    <location>
        <position position="518"/>
    </location>
</feature>
<feature type="transmembrane region" description="Helical" evidence="1">
    <location>
        <begin position="519"/>
        <end position="539"/>
    </location>
</feature>
<feature type="topological domain" description="Extracellular" evidence="1">
    <location>
        <begin position="540"/>
        <end position="552"/>
    </location>
</feature>
<feature type="transmembrane region" description="Helical" evidence="1">
    <location>
        <begin position="553"/>
        <end position="573"/>
    </location>
</feature>
<feature type="topological domain" description="Cytoplasmic" evidence="1">
    <location>
        <begin position="574"/>
        <end position="858"/>
    </location>
</feature>
<feature type="region of interest" description="Disordered" evidence="2">
    <location>
        <begin position="1"/>
        <end position="68"/>
    </location>
</feature>
<feature type="region of interest" description="Disordered" evidence="2">
    <location>
        <begin position="707"/>
        <end position="731"/>
    </location>
</feature>
<feature type="compositionally biased region" description="Acidic residues" evidence="2">
    <location>
        <begin position="1"/>
        <end position="16"/>
    </location>
</feature>
<feature type="compositionally biased region" description="Acidic residues" evidence="2">
    <location>
        <begin position="38"/>
        <end position="53"/>
    </location>
</feature>
<feature type="compositionally biased region" description="Acidic residues" evidence="2">
    <location>
        <begin position="714"/>
        <end position="725"/>
    </location>
</feature>
<feature type="modified residue" description="Phosphoserine" evidence="4">
    <location>
        <position position="719"/>
    </location>
</feature>
<feature type="modified residue" description="Phosphoserine" evidence="4">
    <location>
        <position position="721"/>
    </location>
</feature>
<feature type="sequence conflict" description="In Ref. 3; AAF36493." evidence="3" ref="3">
    <original>D</original>
    <variation>N</variation>
    <location>
        <position position="171"/>
    </location>
</feature>
<feature type="sequence conflict" description="In Ref. 3; AAF36493." evidence="3" ref="3">
    <original>C</original>
    <variation>G</variation>
    <location>
        <position position="370"/>
    </location>
</feature>
<protein>
    <recommendedName>
        <fullName>Potassium transporter 7</fullName>
        <shortName>AtHAK7</shortName>
        <shortName>AtPOT7</shortName>
    </recommendedName>
</protein>
<sequence length="858" mass="95354">MAEESSMEGSEKEEIDSSGGGFGDMASMDSIESRWVIQDDDDSEIGVDDDNDGFDGTGLESDEDEIPEHRLIRTGPRVDSFDVEALEVPGAPRNDYEDLTVGRKVLLAFQTLGVVFGDVGTSPLYTFSVMFSKSPVQEKEDVIGALSLVLYTLLLVPLIKYVLVVLWANDDGEGGTFALYSLISRHAKISLIPNQLRSDTRISSFRLKVPCPELERSLKLKEKLENSLILKKILLVLVLAGTSMVIADGVVTPAMSVMSAVGGLKVGVDVVEQDQVVMISVAFLVILFSLQKYGTSKMGLVVGPALLIWFCSLAGIGIYNLIKYDSSVYRAFNPVHIYYFFKRNSINAWYALGGCILCATGSEALFADLCYFSVRSVQLTFVCLVLPCLMLGYMGQAAYLMENHADASQAFFSSVPGSAFWPVLFIANIAALIASRTMTTATFSCIKQSTALGCFPRLKIIHTSRKFMGQIYIPVLNWFLLAVCLVVVCSISSIDEIGNAYGMAELGVMMTTTILVTLIMLLIWQINIVIVIAFLVVFLGVELVFFSSVIASVGDGSWIILVFAVIMFGIMYIWNYGSKLRYETEVEQKLSMDLMRELGCNLGTIRAPGIGLLYNELVKGVPAIFGHFLTTLPAIHSMVIFVCIKYVPVPVVPQNERFLFRRVCTKSYHLFRCIARYGYKDARKETHQAFEQLLIESLEKFIRREAQERSLESDGNDDSDSEEDFPGSRVVIGPNGSMYSMGVPLLSEYRDLNKPIMEMNTSSDHTNHHPFDTSSDSSVSEAEQSLERELSFIHKAKESGVVYLLGHGDIRARKDSWFIKKLVINYFYTFLRKNCRRGIANLSVPQSHLMQVGMTYMV</sequence>
<reference key="1">
    <citation type="journal article" date="2000" name="Nature">
        <title>Sequence and analysis of chromosome 5 of the plant Arabidopsis thaliana.</title>
        <authorList>
            <person name="Tabata S."/>
            <person name="Kaneko T."/>
            <person name="Nakamura Y."/>
            <person name="Kotani H."/>
            <person name="Kato T."/>
            <person name="Asamizu E."/>
            <person name="Miyajima N."/>
            <person name="Sasamoto S."/>
            <person name="Kimura T."/>
            <person name="Hosouchi T."/>
            <person name="Kawashima K."/>
            <person name="Kohara M."/>
            <person name="Matsumoto M."/>
            <person name="Matsuno A."/>
            <person name="Muraki A."/>
            <person name="Nakayama S."/>
            <person name="Nakazaki N."/>
            <person name="Naruo K."/>
            <person name="Okumura S."/>
            <person name="Shinpo S."/>
            <person name="Takeuchi C."/>
            <person name="Wada T."/>
            <person name="Watanabe A."/>
            <person name="Yamada M."/>
            <person name="Yasuda M."/>
            <person name="Sato S."/>
            <person name="de la Bastide M."/>
            <person name="Huang E."/>
            <person name="Spiegel L."/>
            <person name="Gnoj L."/>
            <person name="O'Shaughnessy A."/>
            <person name="Preston R."/>
            <person name="Habermann K."/>
            <person name="Murray J."/>
            <person name="Johnson D."/>
            <person name="Rohlfing T."/>
            <person name="Nelson J."/>
            <person name="Stoneking T."/>
            <person name="Pepin K."/>
            <person name="Spieth J."/>
            <person name="Sekhon M."/>
            <person name="Armstrong J."/>
            <person name="Becker M."/>
            <person name="Belter E."/>
            <person name="Cordum H."/>
            <person name="Cordes M."/>
            <person name="Courtney L."/>
            <person name="Courtney W."/>
            <person name="Dante M."/>
            <person name="Du H."/>
            <person name="Edwards J."/>
            <person name="Fryman J."/>
            <person name="Haakensen B."/>
            <person name="Lamar E."/>
            <person name="Latreille P."/>
            <person name="Leonard S."/>
            <person name="Meyer R."/>
            <person name="Mulvaney E."/>
            <person name="Ozersky P."/>
            <person name="Riley A."/>
            <person name="Strowmatt C."/>
            <person name="Wagner-McPherson C."/>
            <person name="Wollam A."/>
            <person name="Yoakum M."/>
            <person name="Bell M."/>
            <person name="Dedhia N."/>
            <person name="Parnell L."/>
            <person name="Shah R."/>
            <person name="Rodriguez M."/>
            <person name="Hoon See L."/>
            <person name="Vil D."/>
            <person name="Baker J."/>
            <person name="Kirchoff K."/>
            <person name="Toth K."/>
            <person name="King L."/>
            <person name="Bahret A."/>
            <person name="Miller B."/>
            <person name="Marra M.A."/>
            <person name="Martienssen R."/>
            <person name="McCombie W.R."/>
            <person name="Wilson R.K."/>
            <person name="Murphy G."/>
            <person name="Bancroft I."/>
            <person name="Volckaert G."/>
            <person name="Wambutt R."/>
            <person name="Duesterhoeft A."/>
            <person name="Stiekema W."/>
            <person name="Pohl T."/>
            <person name="Entian K.-D."/>
            <person name="Terryn N."/>
            <person name="Hartley N."/>
            <person name="Bent E."/>
            <person name="Johnson S."/>
            <person name="Langham S.-A."/>
            <person name="McCullagh B."/>
            <person name="Robben J."/>
            <person name="Grymonprez B."/>
            <person name="Zimmermann W."/>
            <person name="Ramsperger U."/>
            <person name="Wedler H."/>
            <person name="Balke K."/>
            <person name="Wedler E."/>
            <person name="Peters S."/>
            <person name="van Staveren M."/>
            <person name="Dirkse W."/>
            <person name="Mooijman P."/>
            <person name="Klein Lankhorst R."/>
            <person name="Weitzenegger T."/>
            <person name="Bothe G."/>
            <person name="Rose M."/>
            <person name="Hauf J."/>
            <person name="Berneiser S."/>
            <person name="Hempel S."/>
            <person name="Feldpausch M."/>
            <person name="Lamberth S."/>
            <person name="Villarroel R."/>
            <person name="Gielen J."/>
            <person name="Ardiles W."/>
            <person name="Bents O."/>
            <person name="Lemcke K."/>
            <person name="Kolesov G."/>
            <person name="Mayer K.F.X."/>
            <person name="Rudd S."/>
            <person name="Schoof H."/>
            <person name="Schueller C."/>
            <person name="Zaccaria P."/>
            <person name="Mewes H.-W."/>
            <person name="Bevan M."/>
            <person name="Fransz P.F."/>
        </authorList>
    </citation>
    <scope>NUCLEOTIDE SEQUENCE [LARGE SCALE GENOMIC DNA]</scope>
    <source>
        <strain>cv. Columbia</strain>
    </source>
</reference>
<reference key="2">
    <citation type="journal article" date="2017" name="Plant J.">
        <title>Araport11: a complete reannotation of the Arabidopsis thaliana reference genome.</title>
        <authorList>
            <person name="Cheng C.Y."/>
            <person name="Krishnakumar V."/>
            <person name="Chan A.P."/>
            <person name="Thibaud-Nissen F."/>
            <person name="Schobel S."/>
            <person name="Town C.D."/>
        </authorList>
    </citation>
    <scope>GENOME REANNOTATION</scope>
    <source>
        <strain>cv. Columbia</strain>
    </source>
</reference>
<reference key="3">
    <citation type="journal article" date="2000" name="Physiol. Plantarum">
        <title>Cloning of Arabidopsis and barley cDNAs encoding HAK potassium transporters in root and shoot cells.</title>
        <authorList>
            <person name="Rubio F."/>
            <person name="Santa-Maria G.E."/>
            <person name="Rodriguez-Navarro A."/>
        </authorList>
    </citation>
    <scope>NUCLEOTIDE SEQUENCE [MRNA] OF 170-370</scope>
    <source>
        <strain>cv. Columbia</strain>
    </source>
</reference>
<reference key="4">
    <citation type="journal article" date="2001" name="Plant Physiol.">
        <title>Phylogenetic relationships within cation transporter families of Arabidopsis.</title>
        <authorList>
            <person name="Maeser P."/>
            <person name="Thomine S."/>
            <person name="Schroeder J.I."/>
            <person name="Ward J.M."/>
            <person name="Hirschi K."/>
            <person name="Sze H."/>
            <person name="Talke I.N."/>
            <person name="Amtmann A."/>
            <person name="Maathuis F.J.M."/>
            <person name="Sanders D."/>
            <person name="Harper J.F."/>
            <person name="Tchieu J."/>
            <person name="Gribskov M."/>
            <person name="Persans M.W."/>
            <person name="Salt D.E."/>
            <person name="Kim S.A."/>
            <person name="Guerinot M.L."/>
        </authorList>
    </citation>
    <scope>GENE FAMILY</scope>
    <scope>NOMENCLATURE</scope>
</reference>
<reference key="5">
    <citation type="journal article" date="2009" name="Plant Physiol.">
        <title>Large-scale Arabidopsis phosphoproteome profiling reveals novel chloroplast kinase substrates and phosphorylation networks.</title>
        <authorList>
            <person name="Reiland S."/>
            <person name="Messerli G."/>
            <person name="Baerenfaller K."/>
            <person name="Gerrits B."/>
            <person name="Endler A."/>
            <person name="Grossmann J."/>
            <person name="Gruissem W."/>
            <person name="Baginsky S."/>
        </authorList>
    </citation>
    <scope>PHOSPHORYLATION [LARGE SCALE ANALYSIS] AT SER-719 AND SER-721</scope>
    <scope>IDENTIFICATION BY MASS SPECTROMETRY [LARGE SCALE ANALYSIS]</scope>
</reference>
<proteinExistence type="evidence at protein level"/>
<accession>Q9FY75</accession>
<accession>Q9M7K1</accession>
<dbReference type="EMBL" id="AL391712">
    <property type="protein sequence ID" value="CAC05466.1"/>
    <property type="status" value="ALT_SEQ"/>
    <property type="molecule type" value="Genomic_DNA"/>
</dbReference>
<dbReference type="EMBL" id="CP002688">
    <property type="protein sequence ID" value="AED91387.1"/>
    <property type="molecule type" value="Genomic_DNA"/>
</dbReference>
<dbReference type="EMBL" id="AF129481">
    <property type="protein sequence ID" value="AAF36493.1"/>
    <property type="molecule type" value="mRNA"/>
</dbReference>
<dbReference type="RefSeq" id="NP_568213.2">
    <property type="nucleotide sequence ID" value="NM_120977.3"/>
</dbReference>
<dbReference type="BioGRID" id="16077">
    <property type="interactions" value="10"/>
</dbReference>
<dbReference type="FunCoup" id="Q9FY75">
    <property type="interactions" value="706"/>
</dbReference>
<dbReference type="IntAct" id="Q9FY75">
    <property type="interactions" value="9"/>
</dbReference>
<dbReference type="STRING" id="3702.Q9FY75"/>
<dbReference type="iPTMnet" id="Q9FY75"/>
<dbReference type="PaxDb" id="3702-AT5G09400.1"/>
<dbReference type="ProteomicsDB" id="249055"/>
<dbReference type="EnsemblPlants" id="AT5G09400.1">
    <property type="protein sequence ID" value="AT5G09400.1"/>
    <property type="gene ID" value="AT5G09400"/>
</dbReference>
<dbReference type="GeneID" id="830799"/>
<dbReference type="Gramene" id="AT5G09400.1">
    <property type="protein sequence ID" value="AT5G09400.1"/>
    <property type="gene ID" value="AT5G09400"/>
</dbReference>
<dbReference type="KEGG" id="ath:AT5G09400"/>
<dbReference type="Araport" id="AT5G09400"/>
<dbReference type="TAIR" id="AT5G09400">
    <property type="gene designation" value="KUP7"/>
</dbReference>
<dbReference type="eggNOG" id="ENOG502QPSA">
    <property type="taxonomic scope" value="Eukaryota"/>
</dbReference>
<dbReference type="HOGENOM" id="CLU_008142_2_0_1"/>
<dbReference type="InParanoid" id="Q9FY75"/>
<dbReference type="OMA" id="IWHAVAN"/>
<dbReference type="PhylomeDB" id="Q9FY75"/>
<dbReference type="PRO" id="PR:Q9FY75"/>
<dbReference type="Proteomes" id="UP000006548">
    <property type="component" value="Chromosome 5"/>
</dbReference>
<dbReference type="ExpressionAtlas" id="Q9FY75">
    <property type="expression patterns" value="baseline and differential"/>
</dbReference>
<dbReference type="GO" id="GO:0000325">
    <property type="term" value="C:plant-type vacuole"/>
    <property type="evidence" value="ECO:0007005"/>
    <property type="project" value="TAIR"/>
</dbReference>
<dbReference type="GO" id="GO:0005886">
    <property type="term" value="C:plasma membrane"/>
    <property type="evidence" value="ECO:0000314"/>
    <property type="project" value="TAIR"/>
</dbReference>
<dbReference type="GO" id="GO:0005774">
    <property type="term" value="C:vacuolar membrane"/>
    <property type="evidence" value="ECO:0007005"/>
    <property type="project" value="TAIR"/>
</dbReference>
<dbReference type="GO" id="GO:0005773">
    <property type="term" value="C:vacuole"/>
    <property type="evidence" value="ECO:0007005"/>
    <property type="project" value="TAIR"/>
</dbReference>
<dbReference type="GO" id="GO:0004016">
    <property type="term" value="F:adenylate cyclase activity"/>
    <property type="evidence" value="ECO:0000314"/>
    <property type="project" value="TAIR"/>
</dbReference>
<dbReference type="GO" id="GO:0015079">
    <property type="term" value="F:potassium ion transmembrane transporter activity"/>
    <property type="evidence" value="ECO:0007669"/>
    <property type="project" value="InterPro"/>
</dbReference>
<dbReference type="GO" id="GO:0006813">
    <property type="term" value="P:potassium ion transport"/>
    <property type="evidence" value="ECO:0000315"/>
    <property type="project" value="TAIR"/>
</dbReference>
<dbReference type="InterPro" id="IPR003855">
    <property type="entry name" value="K+_transporter"/>
</dbReference>
<dbReference type="InterPro" id="IPR053952">
    <property type="entry name" value="K_trans_C"/>
</dbReference>
<dbReference type="InterPro" id="IPR053951">
    <property type="entry name" value="K_trans_N"/>
</dbReference>
<dbReference type="NCBIfam" id="TIGR00794">
    <property type="entry name" value="kup"/>
    <property type="match status" value="1"/>
</dbReference>
<dbReference type="PANTHER" id="PTHR30540">
    <property type="entry name" value="OSMOTIC STRESS POTASSIUM TRANSPORTER"/>
    <property type="match status" value="1"/>
</dbReference>
<dbReference type="PANTHER" id="PTHR30540:SF8">
    <property type="entry name" value="POTASSIUM TRANSPORTER 7"/>
    <property type="match status" value="1"/>
</dbReference>
<dbReference type="Pfam" id="PF02705">
    <property type="entry name" value="K_trans"/>
    <property type="match status" value="1"/>
</dbReference>
<dbReference type="Pfam" id="PF22776">
    <property type="entry name" value="K_trans_C"/>
    <property type="match status" value="1"/>
</dbReference>
<name>POT7_ARATH</name>